<feature type="chain" id="PRO_0000048948" description="Homeobox protein Nkx-3.2">
    <location>
        <begin position="1"/>
        <end position="333"/>
    </location>
</feature>
<feature type="DNA-binding region" description="Homeobox" evidence="1">
    <location>
        <begin position="206"/>
        <end position="265"/>
    </location>
</feature>
<feature type="region of interest" description="Disordered" evidence="2">
    <location>
        <begin position="74"/>
        <end position="121"/>
    </location>
</feature>
<feature type="region of interest" description="Disordered" evidence="2">
    <location>
        <begin position="137"/>
        <end position="212"/>
    </location>
</feature>
<feature type="compositionally biased region" description="Basic and acidic residues" evidence="2">
    <location>
        <begin position="137"/>
        <end position="148"/>
    </location>
</feature>
<feature type="compositionally biased region" description="Gly residues" evidence="2">
    <location>
        <begin position="179"/>
        <end position="191"/>
    </location>
</feature>
<feature type="sequence conflict" description="In Ref. 1; AAB47764." evidence="6" ref="1">
    <original>A</original>
    <variation>P</variation>
    <location>
        <position position="134"/>
    </location>
</feature>
<feature type="sequence conflict" description="In Ref. 1; AAB47764." evidence="6" ref="1">
    <original>S</original>
    <variation>T</variation>
    <location>
        <position position="168"/>
    </location>
</feature>
<feature type="sequence conflict" description="In Ref. 1; AAB47764." evidence="6" ref="1">
    <original>Q</original>
    <variation>L</variation>
    <location>
        <position position="292"/>
    </location>
</feature>
<protein>
    <recommendedName>
        <fullName>Homeobox protein Nkx-3.2</fullName>
    </recommendedName>
    <alternativeName>
        <fullName>Bagpipe homeobox protein homolog 1</fullName>
    </alternativeName>
    <alternativeName>
        <fullName>Homeobox protein NK-3 homolog B</fullName>
    </alternativeName>
</protein>
<sequence>MAVRGSGTLTPFSIQAILNKKEERGGLATPEGRPAPGGTEVAVTAAPAVCCWRIFGETEAGALGGAEDSLLASPARTRTAVGQSAESPGGWDSDSALSEENEGRRRCADVPGASGTGRARVTLGLDQPGCELHAAKDLEEEAPVRSDSEMSASVSGDHSPRGEDDSVSPGGARVPGLRGAAGSGASGGQAGGVEEEEEPAAPKPRKKRSRAAFSHAQVFELERRFNHQRYLSGPERADLAASLKLTETQVKIWFQNRRYKTKRRQMAADLLASAPAAKKVAVKVLVRDDQRQYLPGEVLRPPSLLPLQPSYYYPYYCLPGWALSTCAAAAGTQ</sequence>
<reference key="1">
    <citation type="journal article" date="1997" name="Mech. Dev.">
        <title>Bapx1: an evolutionary conserved homologue of the Drosophila bagpipe homeobox gene is expressed in splanchnic mesoderm and the embryonic skeleton.</title>
        <authorList>
            <person name="Tribioli C."/>
            <person name="Frasch M."/>
            <person name="Lufkin T."/>
        </authorList>
    </citation>
    <scope>NUCLEOTIDE SEQUENCE [MRNA]</scope>
</reference>
<reference key="2">
    <citation type="submission" date="2005-07" db="EMBL/GenBank/DDBJ databases">
        <authorList>
            <person name="Mural R.J."/>
            <person name="Adams M.D."/>
            <person name="Myers E.W."/>
            <person name="Smith H.O."/>
            <person name="Venter J.C."/>
        </authorList>
    </citation>
    <scope>NUCLEOTIDE SEQUENCE [LARGE SCALE GENOMIC DNA]</scope>
</reference>
<reference key="3">
    <citation type="journal article" date="2004" name="Genome Res.">
        <title>The status, quality, and expansion of the NIH full-length cDNA project: the Mammalian Gene Collection (MGC).</title>
        <authorList>
            <consortium name="The MGC Project Team"/>
        </authorList>
    </citation>
    <scope>NUCLEOTIDE SEQUENCE [LARGE SCALE MRNA]</scope>
    <source>
        <tissue>Brain</tissue>
    </source>
</reference>
<reference key="4">
    <citation type="journal article" date="2004" name="Development">
        <title>Bapx1 regulates patterning in the middle ear: altered regulatory role in the transition from the proximal jaw during vertebrate evolution.</title>
        <authorList>
            <person name="Tucker A.S."/>
            <person name="Watson R.P."/>
            <person name="Lettice L.A."/>
            <person name="Yamada G."/>
            <person name="Hill R.E."/>
        </authorList>
    </citation>
    <scope>FUNCTION</scope>
    <scope>DEVELOPMENTAL STAGE</scope>
</reference>
<reference key="5">
    <citation type="journal article" date="2006" name="Development">
        <title>Nkx3.2/Bapx1 acts as a negative regulator of chondrocyte maturation.</title>
        <authorList>
            <person name="Provot S."/>
            <person name="Kempf H."/>
            <person name="Murtaugh L.C."/>
            <person name="Chung U.I."/>
            <person name="Kim D.W."/>
            <person name="Chyung J."/>
            <person name="Kronenberg H.M."/>
            <person name="Lassar A.B."/>
        </authorList>
    </citation>
    <scope>FUNCTION</scope>
    <scope>TISSUE SPECIFICITY</scope>
</reference>
<reference key="6">
    <citation type="journal article" date="2009" name="Gastroenterology">
        <title>Role of the homeodomain transcription factor Bapx1 in mouse distal stomach development.</title>
        <authorList>
            <person name="Verzi M.P."/>
            <person name="Stanfel M.N."/>
            <person name="Moses K.A."/>
            <person name="Kim B.M."/>
            <person name="Zhang Y."/>
            <person name="Schwartz R.J."/>
            <person name="Shivdasani R.A."/>
            <person name="Zimmer W.E."/>
        </authorList>
    </citation>
    <scope>FUNCTION</scope>
    <scope>TISSUE SPECIFICITY</scope>
</reference>
<proteinExistence type="evidence at protein level"/>
<evidence type="ECO:0000255" key="1">
    <source>
        <dbReference type="PROSITE-ProRule" id="PRU00108"/>
    </source>
</evidence>
<evidence type="ECO:0000256" key="2">
    <source>
        <dbReference type="SAM" id="MobiDB-lite"/>
    </source>
</evidence>
<evidence type="ECO:0000269" key="3">
    <source>
    </source>
</evidence>
<evidence type="ECO:0000269" key="4">
    <source>
    </source>
</evidence>
<evidence type="ECO:0000269" key="5">
    <source>
    </source>
</evidence>
<evidence type="ECO:0000305" key="6"/>
<gene>
    <name type="primary">Nkx3-2</name>
    <name type="synonym">Bapx1</name>
    <name type="synonym">Nkx-3.2</name>
    <name type="synonym">Nkx3b</name>
</gene>
<dbReference type="EMBL" id="U87957">
    <property type="protein sequence ID" value="AAB47764.1"/>
    <property type="molecule type" value="mRNA"/>
</dbReference>
<dbReference type="EMBL" id="CH466524">
    <property type="protein sequence ID" value="EDL37578.1"/>
    <property type="molecule type" value="Genomic_DNA"/>
</dbReference>
<dbReference type="EMBL" id="BC145872">
    <property type="protein sequence ID" value="AAI45873.1"/>
    <property type="molecule type" value="mRNA"/>
</dbReference>
<dbReference type="EMBL" id="BC145874">
    <property type="protein sequence ID" value="AAI45875.1"/>
    <property type="molecule type" value="mRNA"/>
</dbReference>
<dbReference type="CCDS" id="CCDS19259.1"/>
<dbReference type="RefSeq" id="NP_031550.2">
    <property type="nucleotide sequence ID" value="NM_007524.3"/>
</dbReference>
<dbReference type="SMR" id="P97503"/>
<dbReference type="BioGRID" id="198300">
    <property type="interactions" value="3"/>
</dbReference>
<dbReference type="CORUM" id="P97503"/>
<dbReference type="FunCoup" id="P97503">
    <property type="interactions" value="1482"/>
</dbReference>
<dbReference type="STRING" id="10090.ENSMUSP00000051990"/>
<dbReference type="iPTMnet" id="P97503"/>
<dbReference type="PhosphoSitePlus" id="P97503"/>
<dbReference type="PaxDb" id="10090-ENSMUSP00000051990"/>
<dbReference type="PeptideAtlas" id="P97503"/>
<dbReference type="ProteomicsDB" id="252968"/>
<dbReference type="Antibodypedia" id="22925">
    <property type="antibodies" value="201 antibodies from 30 providers"/>
</dbReference>
<dbReference type="DNASU" id="12020"/>
<dbReference type="Ensembl" id="ENSMUST00000060820.8">
    <property type="protein sequence ID" value="ENSMUSP00000051990.7"/>
    <property type="gene ID" value="ENSMUSG00000049691.9"/>
</dbReference>
<dbReference type="GeneID" id="12020"/>
<dbReference type="KEGG" id="mmu:12020"/>
<dbReference type="UCSC" id="uc008xhc.1">
    <property type="organism name" value="mouse"/>
</dbReference>
<dbReference type="AGR" id="MGI:108015"/>
<dbReference type="CTD" id="579"/>
<dbReference type="MGI" id="MGI:108015">
    <property type="gene designation" value="Nkx3-2"/>
</dbReference>
<dbReference type="VEuPathDB" id="HostDB:ENSMUSG00000049691"/>
<dbReference type="eggNOG" id="KOG0842">
    <property type="taxonomic scope" value="Eukaryota"/>
</dbReference>
<dbReference type="GeneTree" id="ENSGT00940000161843"/>
<dbReference type="HOGENOM" id="CLU_049543_2_0_1"/>
<dbReference type="InParanoid" id="P97503"/>
<dbReference type="OMA" id="RRCADVP"/>
<dbReference type="OrthoDB" id="6159439at2759"/>
<dbReference type="TreeFam" id="TF351204"/>
<dbReference type="BioGRID-ORCS" id="12020">
    <property type="hits" value="5 hits in 78 CRISPR screens"/>
</dbReference>
<dbReference type="ChiTaRS" id="Nkx3-2">
    <property type="organism name" value="mouse"/>
</dbReference>
<dbReference type="PRO" id="PR:P97503"/>
<dbReference type="Proteomes" id="UP000000589">
    <property type="component" value="Chromosome 5"/>
</dbReference>
<dbReference type="RNAct" id="P97503">
    <property type="molecule type" value="protein"/>
</dbReference>
<dbReference type="Bgee" id="ENSMUSG00000049691">
    <property type="expression patterns" value="Expressed in gut mesentery and 78 other cell types or tissues"/>
</dbReference>
<dbReference type="GO" id="GO:0005654">
    <property type="term" value="C:nucleoplasm"/>
    <property type="evidence" value="ECO:0000304"/>
    <property type="project" value="Reactome"/>
</dbReference>
<dbReference type="GO" id="GO:0001227">
    <property type="term" value="F:DNA-binding transcription repressor activity, RNA polymerase II-specific"/>
    <property type="evidence" value="ECO:0000314"/>
    <property type="project" value="NTNU_SB"/>
</dbReference>
<dbReference type="GO" id="GO:0000978">
    <property type="term" value="F:RNA polymerase II cis-regulatory region sequence-specific DNA binding"/>
    <property type="evidence" value="ECO:0000314"/>
    <property type="project" value="NTNU_SB"/>
</dbReference>
<dbReference type="GO" id="GO:0048513">
    <property type="term" value="P:animal organ development"/>
    <property type="evidence" value="ECO:0000315"/>
    <property type="project" value="MGI"/>
</dbReference>
<dbReference type="GO" id="GO:0048645">
    <property type="term" value="P:animal organ formation"/>
    <property type="evidence" value="ECO:0000315"/>
    <property type="project" value="MGI"/>
</dbReference>
<dbReference type="GO" id="GO:0007368">
    <property type="term" value="P:determination of left/right symmetry"/>
    <property type="evidence" value="ECO:0000315"/>
    <property type="project" value="MGI"/>
</dbReference>
<dbReference type="GO" id="GO:0055123">
    <property type="term" value="P:digestive system development"/>
    <property type="evidence" value="ECO:0000315"/>
    <property type="project" value="MGI"/>
</dbReference>
<dbReference type="GO" id="GO:0048706">
    <property type="term" value="P:embryonic skeletal system development"/>
    <property type="evidence" value="ECO:0000315"/>
    <property type="project" value="MGI"/>
</dbReference>
<dbReference type="GO" id="GO:0060576">
    <property type="term" value="P:intestinal epithelial cell development"/>
    <property type="evidence" value="ECO:0000316"/>
    <property type="project" value="MGI"/>
</dbReference>
<dbReference type="GO" id="GO:0042474">
    <property type="term" value="P:middle ear morphogenesis"/>
    <property type="evidence" value="ECO:0000315"/>
    <property type="project" value="MGI"/>
</dbReference>
<dbReference type="GO" id="GO:0043066">
    <property type="term" value="P:negative regulation of apoptotic process"/>
    <property type="evidence" value="ECO:0000315"/>
    <property type="project" value="MGI"/>
</dbReference>
<dbReference type="GO" id="GO:0032331">
    <property type="term" value="P:negative regulation of chondrocyte differentiation"/>
    <property type="evidence" value="ECO:0000315"/>
    <property type="project" value="UniProtKB"/>
</dbReference>
<dbReference type="GO" id="GO:0000122">
    <property type="term" value="P:negative regulation of transcription by RNA polymerase II"/>
    <property type="evidence" value="ECO:0000314"/>
    <property type="project" value="NTNU_SB"/>
</dbReference>
<dbReference type="GO" id="GO:0031016">
    <property type="term" value="P:pancreas development"/>
    <property type="evidence" value="ECO:0000315"/>
    <property type="project" value="MGI"/>
</dbReference>
<dbReference type="GO" id="GO:0001501">
    <property type="term" value="P:skeletal system development"/>
    <property type="evidence" value="ECO:0000315"/>
    <property type="project" value="MGI"/>
</dbReference>
<dbReference type="GO" id="GO:0048705">
    <property type="term" value="P:skeletal system morphogenesis"/>
    <property type="evidence" value="ECO:0000315"/>
    <property type="project" value="MGI"/>
</dbReference>
<dbReference type="GO" id="GO:0048536">
    <property type="term" value="P:spleen development"/>
    <property type="evidence" value="ECO:0000315"/>
    <property type="project" value="MGI"/>
</dbReference>
<dbReference type="CDD" id="cd00086">
    <property type="entry name" value="homeodomain"/>
    <property type="match status" value="1"/>
</dbReference>
<dbReference type="FunFam" id="1.10.10.60:FF:000225">
    <property type="entry name" value="NK3 homeobox 2"/>
    <property type="match status" value="1"/>
</dbReference>
<dbReference type="Gene3D" id="1.10.10.60">
    <property type="entry name" value="Homeodomain-like"/>
    <property type="match status" value="1"/>
</dbReference>
<dbReference type="InterPro" id="IPR001356">
    <property type="entry name" value="HD"/>
</dbReference>
<dbReference type="InterPro" id="IPR020479">
    <property type="entry name" value="HD_metazoa"/>
</dbReference>
<dbReference type="InterPro" id="IPR017970">
    <property type="entry name" value="Homeobox_CS"/>
</dbReference>
<dbReference type="InterPro" id="IPR050394">
    <property type="entry name" value="Homeobox_NK-like"/>
</dbReference>
<dbReference type="InterPro" id="IPR009057">
    <property type="entry name" value="Homeodomain-like_sf"/>
</dbReference>
<dbReference type="PANTHER" id="PTHR24340">
    <property type="entry name" value="HOMEOBOX PROTEIN NKX"/>
    <property type="match status" value="1"/>
</dbReference>
<dbReference type="PANTHER" id="PTHR24340:SF34">
    <property type="entry name" value="HOMEOBOX PROTEIN NKX-3.2"/>
    <property type="match status" value="1"/>
</dbReference>
<dbReference type="Pfam" id="PF00046">
    <property type="entry name" value="Homeodomain"/>
    <property type="match status" value="1"/>
</dbReference>
<dbReference type="PRINTS" id="PR00024">
    <property type="entry name" value="HOMEOBOX"/>
</dbReference>
<dbReference type="SMART" id="SM00389">
    <property type="entry name" value="HOX"/>
    <property type="match status" value="1"/>
</dbReference>
<dbReference type="SUPFAM" id="SSF46689">
    <property type="entry name" value="Homeodomain-like"/>
    <property type="match status" value="1"/>
</dbReference>
<dbReference type="PROSITE" id="PS00027">
    <property type="entry name" value="HOMEOBOX_1"/>
    <property type="match status" value="1"/>
</dbReference>
<dbReference type="PROSITE" id="PS50071">
    <property type="entry name" value="HOMEOBOX_2"/>
    <property type="match status" value="1"/>
</dbReference>
<organism>
    <name type="scientific">Mus musculus</name>
    <name type="common">Mouse</name>
    <dbReference type="NCBI Taxonomy" id="10090"/>
    <lineage>
        <taxon>Eukaryota</taxon>
        <taxon>Metazoa</taxon>
        <taxon>Chordata</taxon>
        <taxon>Craniata</taxon>
        <taxon>Vertebrata</taxon>
        <taxon>Euteleostomi</taxon>
        <taxon>Mammalia</taxon>
        <taxon>Eutheria</taxon>
        <taxon>Euarchontoglires</taxon>
        <taxon>Glires</taxon>
        <taxon>Rodentia</taxon>
        <taxon>Myomorpha</taxon>
        <taxon>Muroidea</taxon>
        <taxon>Muridae</taxon>
        <taxon>Murinae</taxon>
        <taxon>Mus</taxon>
        <taxon>Mus</taxon>
    </lineage>
</organism>
<keyword id="KW-0238">DNA-binding</keyword>
<keyword id="KW-0371">Homeobox</keyword>
<keyword id="KW-0539">Nucleus</keyword>
<keyword id="KW-1185">Reference proteome</keyword>
<keyword id="KW-0678">Repressor</keyword>
<keyword id="KW-0804">Transcription</keyword>
<keyword id="KW-0805">Transcription regulation</keyword>
<accession>P97503</accession>
<accession>A6H6G9</accession>
<comment type="function">
    <text evidence="3 4 5">Transcriptional repressor that acts as a negative regulator of chondrocyte maturation. PLays a role in distal stomach development; required for proper antral-pyloric morphogenesis and development of antral-type epithelium. In concert with GSC, defines the structural components of the middle ear; required for tympanic ring and gonium development and in the regulation of the width of the malleus.</text>
</comment>
<comment type="subcellular location">
    <subcellularLocation>
        <location evidence="6">Nucleus</location>
    </subcellularLocation>
</comment>
<comment type="tissue specificity">
    <text evidence="4 5">Expressed widely in mesoderm at the gastroduodenal junction (at protein level). Expressed in visceral mesoderm and embryonic skeleton. Expression is restricted to immature proliferative chondrocytes during endochondral ossification.</text>
</comment>
<comment type="developmental stage">
    <text evidence="3">During embryogenesis, expressed in a discrete domain within the mandibular component of the first branchial arch and later in the primordia of middle earassociated bones, the gonium and tympanic ring.</text>
</comment>
<comment type="similarity">
    <text evidence="6">Belongs to the NK-3 homeobox family.</text>
</comment>
<name>NKX32_MOUSE</name>